<accession>Q9H115</accession>
<accession>B4DK44</accession>
<accession>Q4G0M0</accession>
<accession>Q4G187</accession>
<accession>Q5JXF9</accession>
<accession>Q8N3C4</accession>
<dbReference type="EMBL" id="AK296385">
    <property type="protein sequence ID" value="BAG59056.1"/>
    <property type="molecule type" value="mRNA"/>
</dbReference>
<dbReference type="EMBL" id="AL096677">
    <property type="status" value="NOT_ANNOTATED_CDS"/>
    <property type="molecule type" value="Genomic_DNA"/>
</dbReference>
<dbReference type="EMBL" id="CH471133">
    <property type="protein sequence ID" value="EAX10152.1"/>
    <property type="molecule type" value="Genomic_DNA"/>
</dbReference>
<dbReference type="EMBL" id="CH471133">
    <property type="protein sequence ID" value="EAX10156.1"/>
    <property type="molecule type" value="Genomic_DNA"/>
</dbReference>
<dbReference type="EMBL" id="BC047426">
    <property type="protein sequence ID" value="AAH47426.1"/>
    <property type="molecule type" value="mRNA"/>
</dbReference>
<dbReference type="EMBL" id="BC060840">
    <property type="protein sequence ID" value="AAH60840.1"/>
    <property type="molecule type" value="mRNA"/>
</dbReference>
<dbReference type="EMBL" id="AL834445">
    <property type="protein sequence ID" value="CAD39105.1"/>
    <property type="molecule type" value="mRNA"/>
</dbReference>
<dbReference type="CCDS" id="CCDS13152.1">
    <molecule id="Q9H115-1"/>
</dbReference>
<dbReference type="CCDS" id="CCDS63241.1">
    <molecule id="Q9H115-3"/>
</dbReference>
<dbReference type="CCDS" id="CCDS63242.1">
    <molecule id="Q9H115-2"/>
</dbReference>
<dbReference type="RefSeq" id="NP_001269947.1">
    <property type="nucleotide sequence ID" value="NM_001283018.1"/>
</dbReference>
<dbReference type="RefSeq" id="NP_001269949.1">
    <molecule id="Q9H115-2"/>
    <property type="nucleotide sequence ID" value="NM_001283020.2"/>
</dbReference>
<dbReference type="RefSeq" id="NP_001269955.1">
    <molecule id="Q9H115-3"/>
    <property type="nucleotide sequence ID" value="NM_001283026.2"/>
</dbReference>
<dbReference type="RefSeq" id="NP_071363.1">
    <molecule id="Q9H115-1"/>
    <property type="nucleotide sequence ID" value="NM_022080.3"/>
</dbReference>
<dbReference type="RefSeq" id="XP_047296315.1">
    <molecule id="Q9H115-3"/>
    <property type="nucleotide sequence ID" value="XM_047440359.1"/>
</dbReference>
<dbReference type="RefSeq" id="XP_054179782.1">
    <molecule id="Q9H115-3"/>
    <property type="nucleotide sequence ID" value="XM_054323807.1"/>
</dbReference>
<dbReference type="SMR" id="Q9H115"/>
<dbReference type="BioGRID" id="121983">
    <property type="interactions" value="50"/>
</dbReference>
<dbReference type="FunCoup" id="Q9H115">
    <property type="interactions" value="1029"/>
</dbReference>
<dbReference type="IntAct" id="Q9H115">
    <property type="interactions" value="49"/>
</dbReference>
<dbReference type="MINT" id="Q9H115"/>
<dbReference type="STRING" id="9606.ENSP00000482826"/>
<dbReference type="GlyGen" id="Q9H115">
    <property type="glycosylation" value="1 site, 1 O-linked glycan (1 site)"/>
</dbReference>
<dbReference type="iPTMnet" id="Q9H115"/>
<dbReference type="PhosphoSitePlus" id="Q9H115"/>
<dbReference type="SwissPalm" id="Q9H115"/>
<dbReference type="BioMuta" id="NAPB"/>
<dbReference type="DMDM" id="18202933"/>
<dbReference type="jPOST" id="Q9H115"/>
<dbReference type="MassIVE" id="Q9H115"/>
<dbReference type="PaxDb" id="9606-ENSP00000482826"/>
<dbReference type="PeptideAtlas" id="Q9H115"/>
<dbReference type="ProteomicsDB" id="4427"/>
<dbReference type="ProteomicsDB" id="62109"/>
<dbReference type="ProteomicsDB" id="80352">
    <molecule id="Q9H115-1"/>
</dbReference>
<dbReference type="Pumba" id="Q9H115"/>
<dbReference type="Antibodypedia" id="42862">
    <property type="antibodies" value="107 antibodies from 21 providers"/>
</dbReference>
<dbReference type="DNASU" id="63908"/>
<dbReference type="Ensembl" id="ENST00000377026.4">
    <molecule id="Q9H115-1"/>
    <property type="protein sequence ID" value="ENSP00000366225.4"/>
    <property type="gene ID" value="ENSG00000125814.17"/>
</dbReference>
<dbReference type="Ensembl" id="ENST00000398425.7">
    <molecule id="Q9H115-3"/>
    <property type="protein sequence ID" value="ENSP00000381459.3"/>
    <property type="gene ID" value="ENSG00000125814.17"/>
</dbReference>
<dbReference type="Ensembl" id="ENST00000432543.6">
    <molecule id="Q9H115-2"/>
    <property type="protein sequence ID" value="ENSP00000413600.2"/>
    <property type="gene ID" value="ENSG00000125814.17"/>
</dbReference>
<dbReference type="GeneID" id="63908"/>
<dbReference type="KEGG" id="hsa:63908"/>
<dbReference type="MANE-Select" id="ENST00000377026.4">
    <property type="protein sequence ID" value="ENSP00000366225.4"/>
    <property type="RefSeq nucleotide sequence ID" value="NM_022080.3"/>
    <property type="RefSeq protein sequence ID" value="NP_071363.1"/>
</dbReference>
<dbReference type="UCSC" id="uc002wta.4">
    <molecule id="Q9H115-1"/>
    <property type="organism name" value="human"/>
</dbReference>
<dbReference type="AGR" id="HGNC:15751"/>
<dbReference type="CTD" id="63908"/>
<dbReference type="DisGeNET" id="63908"/>
<dbReference type="GeneCards" id="NAPB"/>
<dbReference type="HGNC" id="HGNC:15751">
    <property type="gene designation" value="NAPB"/>
</dbReference>
<dbReference type="HPA" id="ENSG00000125814">
    <property type="expression patterns" value="Group enriched (brain, retina)"/>
</dbReference>
<dbReference type="MalaCards" id="NAPB"/>
<dbReference type="MIM" id="611270">
    <property type="type" value="gene"/>
</dbReference>
<dbReference type="MIM" id="620033">
    <property type="type" value="phenotype"/>
</dbReference>
<dbReference type="neXtProt" id="NX_Q9H115"/>
<dbReference type="OpenTargets" id="ENSG00000125814"/>
<dbReference type="PharmGKB" id="PA31444"/>
<dbReference type="VEuPathDB" id="HostDB:ENSG00000125814"/>
<dbReference type="eggNOG" id="KOG1586">
    <property type="taxonomic scope" value="Eukaryota"/>
</dbReference>
<dbReference type="GeneTree" id="ENSGT00390000005826"/>
<dbReference type="HOGENOM" id="CLU_046329_1_1_1"/>
<dbReference type="InParanoid" id="Q9H115"/>
<dbReference type="OMA" id="EKAGNMY"/>
<dbReference type="OrthoDB" id="9984275at2759"/>
<dbReference type="PAN-GO" id="Q9H115">
    <property type="GO annotations" value="7 GO annotations based on evolutionary models"/>
</dbReference>
<dbReference type="PhylomeDB" id="Q9H115"/>
<dbReference type="TreeFam" id="TF316547"/>
<dbReference type="PathwayCommons" id="Q9H115"/>
<dbReference type="Reactome" id="R-HSA-204005">
    <property type="pathway name" value="COPII-mediated vesicle transport"/>
</dbReference>
<dbReference type="Reactome" id="R-HSA-6807878">
    <property type="pathway name" value="COPI-mediated anterograde transport"/>
</dbReference>
<dbReference type="Reactome" id="R-HSA-6811434">
    <property type="pathway name" value="COPI-dependent Golgi-to-ER retrograde traffic"/>
</dbReference>
<dbReference type="Reactome" id="R-HSA-6811438">
    <property type="pathway name" value="Intra-Golgi traffic"/>
</dbReference>
<dbReference type="Reactome" id="R-HSA-6811440">
    <property type="pathway name" value="Retrograde transport at the Trans-Golgi-Network"/>
</dbReference>
<dbReference type="SignaLink" id="Q9H115"/>
<dbReference type="BioGRID-ORCS" id="63908">
    <property type="hits" value="12 hits in 1154 CRISPR screens"/>
</dbReference>
<dbReference type="CD-CODE" id="FB4E32DD">
    <property type="entry name" value="Presynaptic clusters and postsynaptic densities"/>
</dbReference>
<dbReference type="ChiTaRS" id="NAPB">
    <property type="organism name" value="human"/>
</dbReference>
<dbReference type="GeneWiki" id="NAPB"/>
<dbReference type="GenomeRNAi" id="63908"/>
<dbReference type="Pharos" id="Q9H115">
    <property type="development level" value="Tbio"/>
</dbReference>
<dbReference type="PRO" id="PR:Q9H115"/>
<dbReference type="Proteomes" id="UP000005640">
    <property type="component" value="Chromosome 20"/>
</dbReference>
<dbReference type="RNAct" id="Q9H115">
    <property type="molecule type" value="protein"/>
</dbReference>
<dbReference type="Bgee" id="ENSG00000125814">
    <property type="expression patterns" value="Expressed in middle temporal gyrus and 183 other cell types or tissues"/>
</dbReference>
<dbReference type="ExpressionAtlas" id="Q9H115">
    <property type="expression patterns" value="baseline and differential"/>
</dbReference>
<dbReference type="GO" id="GO:0070062">
    <property type="term" value="C:extracellular exosome"/>
    <property type="evidence" value="ECO:0007005"/>
    <property type="project" value="UniProtKB"/>
</dbReference>
<dbReference type="GO" id="GO:0098978">
    <property type="term" value="C:glutamatergic synapse"/>
    <property type="evidence" value="ECO:0007669"/>
    <property type="project" value="Ensembl"/>
</dbReference>
<dbReference type="GO" id="GO:0070044">
    <property type="term" value="C:synaptobrevin 2-SNAP-25-syntaxin-1a complex"/>
    <property type="evidence" value="ECO:0000318"/>
    <property type="project" value="GO_Central"/>
</dbReference>
<dbReference type="GO" id="GO:0005483">
    <property type="term" value="F:soluble NSF attachment protein activity"/>
    <property type="evidence" value="ECO:0000318"/>
    <property type="project" value="GO_Central"/>
</dbReference>
<dbReference type="GO" id="GO:0019905">
    <property type="term" value="F:syntaxin binding"/>
    <property type="evidence" value="ECO:0000318"/>
    <property type="project" value="GO_Central"/>
</dbReference>
<dbReference type="GO" id="GO:0006886">
    <property type="term" value="P:intracellular protein transport"/>
    <property type="evidence" value="ECO:0000318"/>
    <property type="project" value="GO_Central"/>
</dbReference>
<dbReference type="GO" id="GO:0010807">
    <property type="term" value="P:regulation of synaptic vesicle priming"/>
    <property type="evidence" value="ECO:0000318"/>
    <property type="project" value="GO_Central"/>
</dbReference>
<dbReference type="GO" id="GO:0035494">
    <property type="term" value="P:SNARE complex disassembly"/>
    <property type="evidence" value="ECO:0000318"/>
    <property type="project" value="GO_Central"/>
</dbReference>
<dbReference type="GO" id="GO:0035249">
    <property type="term" value="P:synaptic transmission, glutamatergic"/>
    <property type="evidence" value="ECO:0000318"/>
    <property type="project" value="GO_Central"/>
</dbReference>
<dbReference type="CDD" id="cd15832">
    <property type="entry name" value="SNAP"/>
    <property type="match status" value="1"/>
</dbReference>
<dbReference type="FunFam" id="1.25.40.10:FF:000028">
    <property type="entry name" value="beta-soluble NSF attachment protein-like isoform X1"/>
    <property type="match status" value="1"/>
</dbReference>
<dbReference type="Gene3D" id="1.25.40.10">
    <property type="entry name" value="Tetratricopeptide repeat domain"/>
    <property type="match status" value="1"/>
</dbReference>
<dbReference type="InterPro" id="IPR000744">
    <property type="entry name" value="NSF_attach"/>
</dbReference>
<dbReference type="InterPro" id="IPR011990">
    <property type="entry name" value="TPR-like_helical_dom_sf"/>
</dbReference>
<dbReference type="PANTHER" id="PTHR13768:SF12">
    <property type="entry name" value="BETA-SOLUBLE NSF ATTACHMENT PROTEIN"/>
    <property type="match status" value="1"/>
</dbReference>
<dbReference type="PANTHER" id="PTHR13768">
    <property type="entry name" value="SOLUBLE NSF ATTACHMENT PROTEIN SNAP"/>
    <property type="match status" value="1"/>
</dbReference>
<dbReference type="Pfam" id="PF14938">
    <property type="entry name" value="SNAP"/>
    <property type="match status" value="1"/>
</dbReference>
<dbReference type="PRINTS" id="PR00448">
    <property type="entry name" value="NSFATTACHMNT"/>
</dbReference>
<dbReference type="SUPFAM" id="SSF48452">
    <property type="entry name" value="TPR-like"/>
    <property type="match status" value="1"/>
</dbReference>
<name>SNAB_HUMAN</name>
<feature type="chain" id="PRO_0000219060" description="Beta-soluble NSF attachment protein">
    <location>
        <begin position="1"/>
        <end position="298"/>
    </location>
</feature>
<feature type="splice variant" id="VSP_055276" description="In isoform 3." evidence="6">
    <original>MDNAGKEREAVQLMAEAEKR</original>
    <variation>MTLLPALWMLEMLTKRQIPK</variation>
    <location>
        <begin position="1"/>
        <end position="20"/>
    </location>
</feature>
<feature type="splice variant" id="VSP_055277" description="In isoform 3." evidence="6">
    <location>
        <begin position="21"/>
        <end position="114"/>
    </location>
</feature>
<feature type="splice variant" id="VSP_055278" description="In isoform 2." evidence="5">
    <location>
        <begin position="60"/>
        <end position="98"/>
    </location>
</feature>
<feature type="sequence variant" id="VAR_087810" description="In DEE107." evidence="4">
    <location>
        <begin position="58"/>
        <end position="298"/>
    </location>
</feature>
<feature type="sequence variant" id="VAR_052026" description="In dbSNP:rs6036399.">
    <original>A</original>
    <variation>T</variation>
    <location>
        <position position="61"/>
    </location>
</feature>
<feature type="sequence variant" id="VAR_087811" description="In DEE107." evidence="3">
    <location>
        <begin position="160"/>
        <end position="298"/>
    </location>
</feature>
<proteinExistence type="evidence at protein level"/>
<comment type="function">
    <text evidence="2">Required for vesicular transport between the endoplasmic reticulum and the Golgi apparatus.</text>
</comment>
<comment type="subunit">
    <text evidence="1">Interacts with PRKCABP, and disrupts the interaction between GRIA2 and PRKCABP, leading to the internalization of GRIA2.</text>
</comment>
<comment type="interaction">
    <interactant intactId="EBI-3921185">
        <id>Q9H115</id>
    </interactant>
    <interactant intactId="EBI-3904621">
        <id>P20292</id>
        <label>ALOX5AP</label>
    </interactant>
    <organismsDiffer>false</organismsDiffer>
    <experiments>3</experiments>
</comment>
<comment type="interaction">
    <interactant intactId="EBI-3921185">
        <id>Q9H115</id>
    </interactant>
    <interactant intactId="EBI-714543">
        <id>Q15041</id>
        <label>ARL6IP1</label>
    </interactant>
    <organismsDiffer>false</organismsDiffer>
    <experiments>3</experiments>
</comment>
<comment type="interaction">
    <interactant intactId="EBI-3921185">
        <id>Q9H115</id>
    </interactant>
    <interactant intactId="EBI-749204">
        <id>O15155</id>
        <label>BET1</label>
    </interactant>
    <organismsDiffer>false</organismsDiffer>
    <experiments>3</experiments>
</comment>
<comment type="interaction">
    <interactant intactId="EBI-3921185">
        <id>Q9H115</id>
    </interactant>
    <interactant intactId="EBI-1045797">
        <id>Q8N5K1</id>
        <label>CISD2</label>
    </interactant>
    <organismsDiffer>false</organismsDiffer>
    <experiments>3</experiments>
</comment>
<comment type="interaction">
    <interactant intactId="EBI-3921185">
        <id>Q9H115</id>
    </interactant>
    <interactant intactId="EBI-2873246">
        <id>Q8IUN9</id>
        <label>CLEC10A</label>
    </interactant>
    <organismsDiffer>false</organismsDiffer>
    <experiments>5</experiments>
</comment>
<comment type="interaction">
    <interactant intactId="EBI-3921185">
        <id>Q9H115</id>
    </interactant>
    <interactant intactId="EBI-6942903">
        <id>Q96BA8</id>
        <label>CREB3L1</label>
    </interactant>
    <organismsDiffer>false</organismsDiffer>
    <experiments>3</experiments>
</comment>
<comment type="interaction">
    <interactant intactId="EBI-3921185">
        <id>Q9H115</id>
    </interactant>
    <interactant intactId="EBI-12831978">
        <id>Q6ZPD8</id>
        <label>DGAT2L6</label>
    </interactant>
    <organismsDiffer>false</organismsDiffer>
    <experiments>3</experiments>
</comment>
<comment type="interaction">
    <interactant intactId="EBI-3921185">
        <id>Q9H115</id>
    </interactant>
    <interactant intactId="EBI-18304435">
        <id>Q5JX71</id>
        <label>FAM209A</label>
    </interactant>
    <organismsDiffer>false</organismsDiffer>
    <experiments>3</experiments>
</comment>
<comment type="interaction">
    <interactant intactId="EBI-3921185">
        <id>Q9H115</id>
    </interactant>
    <interactant intactId="EBI-3909454">
        <id>O95377</id>
        <label>GJB5</label>
    </interactant>
    <organismsDiffer>false</organismsDiffer>
    <experiments>3</experiments>
</comment>
<comment type="interaction">
    <interactant intactId="EBI-3921185">
        <id>Q9H115</id>
    </interactant>
    <interactant intactId="EBI-18053395">
        <id>Q7Z5P4</id>
        <label>HSD17B13</label>
    </interactant>
    <organismsDiffer>false</organismsDiffer>
    <experiments>3</experiments>
</comment>
<comment type="interaction">
    <interactant intactId="EBI-3921185">
        <id>Q9H115</id>
    </interactant>
    <interactant intactId="EBI-17888181">
        <id>Q9UGI6-2</id>
        <label>KCNN3</label>
    </interactant>
    <organismsDiffer>false</organismsDiffer>
    <experiments>3</experiments>
</comment>
<comment type="interaction">
    <interactant intactId="EBI-3921185">
        <id>Q9H115</id>
    </interactant>
    <interactant intactId="EBI-17490413">
        <id>A8MZ59</id>
        <label>LEUTX</label>
    </interactant>
    <organismsDiffer>false</organismsDiffer>
    <experiments>3</experiments>
</comment>
<comment type="interaction">
    <interactant intactId="EBI-3921185">
        <id>Q9H115</id>
    </interactant>
    <interactant intactId="EBI-949945">
        <id>Q53GL0</id>
        <label>PLEKHO1</label>
    </interactant>
    <organismsDiffer>false</organismsDiffer>
    <experiments>3</experiments>
</comment>
<comment type="interaction">
    <interactant intactId="EBI-3921185">
        <id>Q9H115</id>
    </interactant>
    <interactant intactId="EBI-727004">
        <id>O00560</id>
        <label>SDCBP</label>
    </interactant>
    <organismsDiffer>false</organismsDiffer>
    <experiments>3</experiments>
</comment>
<comment type="interaction">
    <interactant intactId="EBI-3921185">
        <id>Q9H115</id>
    </interactant>
    <interactant intactId="EBI-750381">
        <id>O15389</id>
        <label>SIGLEC5</label>
    </interactant>
    <organismsDiffer>false</organismsDiffer>
    <experiments>3</experiments>
</comment>
<comment type="interaction">
    <interactant intactId="EBI-3921185">
        <id>Q9H115</id>
    </interactant>
    <interactant intactId="EBI-10188497">
        <id>A8K287</id>
        <label>SNAP23</label>
    </interactant>
    <organismsDiffer>false</organismsDiffer>
    <experiments>3</experiments>
</comment>
<comment type="interaction">
    <interactant intactId="EBI-3921185">
        <id>Q9H115</id>
    </interactant>
    <interactant intactId="EBI-745000">
        <id>O00161</id>
        <label>SNAP23</label>
    </interactant>
    <organismsDiffer>false</organismsDiffer>
    <experiments>3</experiments>
</comment>
<comment type="interaction">
    <interactant intactId="EBI-3921185">
        <id>Q9H115</id>
    </interactant>
    <interactant intactId="EBI-490676">
        <id>O95721</id>
        <label>SNAP29</label>
    </interactant>
    <organismsDiffer>false</organismsDiffer>
    <experiments>8</experiments>
</comment>
<comment type="interaction">
    <interactant intactId="EBI-3921185">
        <id>Q9H115</id>
    </interactant>
    <interactant intactId="EBI-2853548">
        <id>O14662</id>
        <label>STX16</label>
    </interactant>
    <organismsDiffer>false</organismsDiffer>
    <experiments>3</experiments>
</comment>
<comment type="interaction">
    <interactant intactId="EBI-3921185">
        <id>Q9H115</id>
    </interactant>
    <interactant intactId="EBI-9089968">
        <id>O14662-5</id>
        <label>STX16</label>
    </interactant>
    <organismsDiffer>false</organismsDiffer>
    <experiments>3</experiments>
</comment>
<comment type="interaction">
    <interactant intactId="EBI-3921185">
        <id>Q9H115</id>
    </interactant>
    <interactant intactId="EBI-8484990">
        <id>Q8N4C7</id>
        <label>STX19</label>
    </interactant>
    <organismsDiffer>false</organismsDiffer>
    <experiments>3</experiments>
</comment>
<comment type="interaction">
    <interactant intactId="EBI-3921185">
        <id>Q9H115</id>
    </interactant>
    <interactant intactId="EBI-712466">
        <id>Q16623</id>
        <label>STX1A</label>
    </interactant>
    <organismsDiffer>false</organismsDiffer>
    <experiments>4</experiments>
</comment>
<comment type="interaction">
    <interactant intactId="EBI-3921185">
        <id>Q9H115</id>
    </interactant>
    <interactant intactId="EBI-9071709">
        <id>P61266</id>
        <label>STX1B</label>
    </interactant>
    <organismsDiffer>false</organismsDiffer>
    <experiments>5</experiments>
</comment>
<comment type="interaction">
    <interactant intactId="EBI-3921185">
        <id>Q9H115</id>
    </interactant>
    <interactant intactId="EBI-11956649">
        <id>P32856-2</id>
        <label>STX2</label>
    </interactant>
    <organismsDiffer>false</organismsDiffer>
    <experiments>3</experiments>
</comment>
<comment type="interaction">
    <interactant intactId="EBI-3921185">
        <id>Q9H115</id>
    </interactant>
    <interactant intactId="EBI-1394295">
        <id>Q13277</id>
        <label>STX3</label>
    </interactant>
    <organismsDiffer>false</organismsDiffer>
    <experiments>8</experiments>
</comment>
<comment type="interaction">
    <interactant intactId="EBI-3921185">
        <id>Q9H115</id>
    </interactant>
    <interactant intactId="EBI-744942">
        <id>Q12846</id>
        <label>STX4</label>
    </interactant>
    <organismsDiffer>false</organismsDiffer>
    <experiments>6</experiments>
</comment>
<comment type="interaction">
    <interactant intactId="EBI-3921185">
        <id>Q9H115</id>
    </interactant>
    <interactant intactId="EBI-714206">
        <id>Q13190</id>
        <label>STX5</label>
    </interactant>
    <organismsDiffer>false</organismsDiffer>
    <experiments>9</experiments>
</comment>
<comment type="interaction">
    <interactant intactId="EBI-3921185">
        <id>Q9H115</id>
    </interactant>
    <interactant intactId="EBI-2695795">
        <id>O43752</id>
        <label>STX6</label>
    </interactant>
    <organismsDiffer>false</organismsDiffer>
    <experiments>5</experiments>
</comment>
<comment type="interaction">
    <interactant intactId="EBI-3921185">
        <id>Q9H115</id>
    </interactant>
    <interactant intactId="EBI-524909">
        <id>P21579</id>
        <label>SYT1</label>
    </interactant>
    <organismsDiffer>false</organismsDiffer>
    <experiments>3</experiments>
</comment>
<comment type="interaction">
    <interactant intactId="EBI-3921185">
        <id>Q9H115</id>
    </interactant>
    <interactant intactId="EBI-8032987">
        <id>Q8N9I0</id>
        <label>SYT2</label>
    </interactant>
    <organismsDiffer>false</organismsDiffer>
    <experiments>3</experiments>
</comment>
<comment type="interaction">
    <interactant intactId="EBI-3921185">
        <id>Q9H115</id>
    </interactant>
    <interactant intactId="EBI-3916574">
        <id>O14948</id>
        <label>TFEC</label>
    </interactant>
    <organismsDiffer>false</organismsDiffer>
    <experiments>3</experiments>
</comment>
<comment type="interaction">
    <interactant intactId="EBI-3921185">
        <id>Q9H115</id>
    </interactant>
    <interactant intactId="EBI-7238458">
        <id>Q8IV31</id>
        <label>TMEM139</label>
    </interactant>
    <organismsDiffer>false</organismsDiffer>
    <experiments>3</experiments>
</comment>
<comment type="subcellular location">
    <subcellularLocation>
        <location evidence="1">Membrane</location>
        <topology evidence="1">Peripheral membrane protein</topology>
    </subcellularLocation>
</comment>
<comment type="alternative products">
    <event type="alternative splicing"/>
    <isoform>
        <id>Q9H115-1</id>
        <name>1</name>
        <sequence type="displayed"/>
    </isoform>
    <isoform>
        <id>Q9H115-2</id>
        <name>2</name>
        <sequence type="described" ref="VSP_055278"/>
    </isoform>
    <isoform>
        <id>Q9H115-3</id>
        <name>3</name>
        <sequence type="described" ref="VSP_055276 VSP_055277"/>
    </isoform>
</comment>
<comment type="disease" evidence="3 4">
    <disease id="DI-06502">
        <name>Developmental and epileptic encephalopathy 107</name>
        <acronym>DEE107</acronym>
        <description>A form of epileptic encephalopathy, a heterogeneous group of early-onset epilepsies characterized by refractory seizures, neurodevelopmental impairment, and poor prognosis. Development is normal prior to seizure onset, after which cognitive and motor delays become apparent. DEE107 is an autosomal recessive form characterized by onset of seizures in the first months of life. Affected individuals have severe global developmental delay, profound intellectual disability, progressive microcephaly, and hypotonia.</description>
        <dbReference type="MIM" id="620033"/>
    </disease>
    <text>The disease is caused by variants affecting the gene represented in this entry.</text>
</comment>
<comment type="similarity">
    <text evidence="7">Belongs to the SNAP family.</text>
</comment>
<keyword id="KW-0025">Alternative splicing</keyword>
<keyword id="KW-0225">Disease variant</keyword>
<keyword id="KW-0887">Epilepsy</keyword>
<keyword id="KW-0931">ER-Golgi transport</keyword>
<keyword id="KW-0991">Intellectual disability</keyword>
<keyword id="KW-0472">Membrane</keyword>
<keyword id="KW-0653">Protein transport</keyword>
<keyword id="KW-1267">Proteomics identification</keyword>
<keyword id="KW-1185">Reference proteome</keyword>
<keyword id="KW-0813">Transport</keyword>
<reference key="1">
    <citation type="journal article" date="2004" name="Nat. Genet.">
        <title>Complete sequencing and characterization of 21,243 full-length human cDNAs.</title>
        <authorList>
            <person name="Ota T."/>
            <person name="Suzuki Y."/>
            <person name="Nishikawa T."/>
            <person name="Otsuki T."/>
            <person name="Sugiyama T."/>
            <person name="Irie R."/>
            <person name="Wakamatsu A."/>
            <person name="Hayashi K."/>
            <person name="Sato H."/>
            <person name="Nagai K."/>
            <person name="Kimura K."/>
            <person name="Makita H."/>
            <person name="Sekine M."/>
            <person name="Obayashi M."/>
            <person name="Nishi T."/>
            <person name="Shibahara T."/>
            <person name="Tanaka T."/>
            <person name="Ishii S."/>
            <person name="Yamamoto J."/>
            <person name="Saito K."/>
            <person name="Kawai Y."/>
            <person name="Isono Y."/>
            <person name="Nakamura Y."/>
            <person name="Nagahari K."/>
            <person name="Murakami K."/>
            <person name="Yasuda T."/>
            <person name="Iwayanagi T."/>
            <person name="Wagatsuma M."/>
            <person name="Shiratori A."/>
            <person name="Sudo H."/>
            <person name="Hosoiri T."/>
            <person name="Kaku Y."/>
            <person name="Kodaira H."/>
            <person name="Kondo H."/>
            <person name="Sugawara M."/>
            <person name="Takahashi M."/>
            <person name="Kanda K."/>
            <person name="Yokoi T."/>
            <person name="Furuya T."/>
            <person name="Kikkawa E."/>
            <person name="Omura Y."/>
            <person name="Abe K."/>
            <person name="Kamihara K."/>
            <person name="Katsuta N."/>
            <person name="Sato K."/>
            <person name="Tanikawa M."/>
            <person name="Yamazaki M."/>
            <person name="Ninomiya K."/>
            <person name="Ishibashi T."/>
            <person name="Yamashita H."/>
            <person name="Murakawa K."/>
            <person name="Fujimori K."/>
            <person name="Tanai H."/>
            <person name="Kimata M."/>
            <person name="Watanabe M."/>
            <person name="Hiraoka S."/>
            <person name="Chiba Y."/>
            <person name="Ishida S."/>
            <person name="Ono Y."/>
            <person name="Takiguchi S."/>
            <person name="Watanabe S."/>
            <person name="Yosida M."/>
            <person name="Hotuta T."/>
            <person name="Kusano J."/>
            <person name="Kanehori K."/>
            <person name="Takahashi-Fujii A."/>
            <person name="Hara H."/>
            <person name="Tanase T.-O."/>
            <person name="Nomura Y."/>
            <person name="Togiya S."/>
            <person name="Komai F."/>
            <person name="Hara R."/>
            <person name="Takeuchi K."/>
            <person name="Arita M."/>
            <person name="Imose N."/>
            <person name="Musashino K."/>
            <person name="Yuuki H."/>
            <person name="Oshima A."/>
            <person name="Sasaki N."/>
            <person name="Aotsuka S."/>
            <person name="Yoshikawa Y."/>
            <person name="Matsunawa H."/>
            <person name="Ichihara T."/>
            <person name="Shiohata N."/>
            <person name="Sano S."/>
            <person name="Moriya S."/>
            <person name="Momiyama H."/>
            <person name="Satoh N."/>
            <person name="Takami S."/>
            <person name="Terashima Y."/>
            <person name="Suzuki O."/>
            <person name="Nakagawa S."/>
            <person name="Senoh A."/>
            <person name="Mizoguchi H."/>
            <person name="Goto Y."/>
            <person name="Shimizu F."/>
            <person name="Wakebe H."/>
            <person name="Hishigaki H."/>
            <person name="Watanabe T."/>
            <person name="Sugiyama A."/>
            <person name="Takemoto M."/>
            <person name="Kawakami B."/>
            <person name="Yamazaki M."/>
            <person name="Watanabe K."/>
            <person name="Kumagai A."/>
            <person name="Itakura S."/>
            <person name="Fukuzumi Y."/>
            <person name="Fujimori Y."/>
            <person name="Komiyama M."/>
            <person name="Tashiro H."/>
            <person name="Tanigami A."/>
            <person name="Fujiwara T."/>
            <person name="Ono T."/>
            <person name="Yamada K."/>
            <person name="Fujii Y."/>
            <person name="Ozaki K."/>
            <person name="Hirao M."/>
            <person name="Ohmori Y."/>
            <person name="Kawabata A."/>
            <person name="Hikiji T."/>
            <person name="Kobatake N."/>
            <person name="Inagaki H."/>
            <person name="Ikema Y."/>
            <person name="Okamoto S."/>
            <person name="Okitani R."/>
            <person name="Kawakami T."/>
            <person name="Noguchi S."/>
            <person name="Itoh T."/>
            <person name="Shigeta K."/>
            <person name="Senba T."/>
            <person name="Matsumura K."/>
            <person name="Nakajima Y."/>
            <person name="Mizuno T."/>
            <person name="Morinaga M."/>
            <person name="Sasaki M."/>
            <person name="Togashi T."/>
            <person name="Oyama M."/>
            <person name="Hata H."/>
            <person name="Watanabe M."/>
            <person name="Komatsu T."/>
            <person name="Mizushima-Sugano J."/>
            <person name="Satoh T."/>
            <person name="Shirai Y."/>
            <person name="Takahashi Y."/>
            <person name="Nakagawa K."/>
            <person name="Okumura K."/>
            <person name="Nagase T."/>
            <person name="Nomura N."/>
            <person name="Kikuchi H."/>
            <person name="Masuho Y."/>
            <person name="Yamashita R."/>
            <person name="Nakai K."/>
            <person name="Yada T."/>
            <person name="Nakamura Y."/>
            <person name="Ohara O."/>
            <person name="Isogai T."/>
            <person name="Sugano S."/>
        </authorList>
    </citation>
    <scope>NUCLEOTIDE SEQUENCE [LARGE SCALE MRNA] (ISOFORM 2)</scope>
    <source>
        <tissue>Thalamus</tissue>
    </source>
</reference>
<reference key="2">
    <citation type="journal article" date="2001" name="Nature">
        <title>The DNA sequence and comparative analysis of human chromosome 20.</title>
        <authorList>
            <person name="Deloukas P."/>
            <person name="Matthews L.H."/>
            <person name="Ashurst J.L."/>
            <person name="Burton J."/>
            <person name="Gilbert J.G.R."/>
            <person name="Jones M."/>
            <person name="Stavrides G."/>
            <person name="Almeida J.P."/>
            <person name="Babbage A.K."/>
            <person name="Bagguley C.L."/>
            <person name="Bailey J."/>
            <person name="Barlow K.F."/>
            <person name="Bates K.N."/>
            <person name="Beard L.M."/>
            <person name="Beare D.M."/>
            <person name="Beasley O.P."/>
            <person name="Bird C.P."/>
            <person name="Blakey S.E."/>
            <person name="Bridgeman A.M."/>
            <person name="Brown A.J."/>
            <person name="Buck D."/>
            <person name="Burrill W.D."/>
            <person name="Butler A.P."/>
            <person name="Carder C."/>
            <person name="Carter N.P."/>
            <person name="Chapman J.C."/>
            <person name="Clamp M."/>
            <person name="Clark G."/>
            <person name="Clark L.N."/>
            <person name="Clark S.Y."/>
            <person name="Clee C.M."/>
            <person name="Clegg S."/>
            <person name="Cobley V.E."/>
            <person name="Collier R.E."/>
            <person name="Connor R.E."/>
            <person name="Corby N.R."/>
            <person name="Coulson A."/>
            <person name="Coville G.J."/>
            <person name="Deadman R."/>
            <person name="Dhami P.D."/>
            <person name="Dunn M."/>
            <person name="Ellington A.G."/>
            <person name="Frankland J.A."/>
            <person name="Fraser A."/>
            <person name="French L."/>
            <person name="Garner P."/>
            <person name="Grafham D.V."/>
            <person name="Griffiths C."/>
            <person name="Griffiths M.N.D."/>
            <person name="Gwilliam R."/>
            <person name="Hall R.E."/>
            <person name="Hammond S."/>
            <person name="Harley J.L."/>
            <person name="Heath P.D."/>
            <person name="Ho S."/>
            <person name="Holden J.L."/>
            <person name="Howden P.J."/>
            <person name="Huckle E."/>
            <person name="Hunt A.R."/>
            <person name="Hunt S.E."/>
            <person name="Jekosch K."/>
            <person name="Johnson C.M."/>
            <person name="Johnson D."/>
            <person name="Kay M.P."/>
            <person name="Kimberley A.M."/>
            <person name="King A."/>
            <person name="Knights A."/>
            <person name="Laird G.K."/>
            <person name="Lawlor S."/>
            <person name="Lehvaeslaiho M.H."/>
            <person name="Leversha M.A."/>
            <person name="Lloyd C."/>
            <person name="Lloyd D.M."/>
            <person name="Lovell J.D."/>
            <person name="Marsh V.L."/>
            <person name="Martin S.L."/>
            <person name="McConnachie L.J."/>
            <person name="McLay K."/>
            <person name="McMurray A.A."/>
            <person name="Milne S.A."/>
            <person name="Mistry D."/>
            <person name="Moore M.J.F."/>
            <person name="Mullikin J.C."/>
            <person name="Nickerson T."/>
            <person name="Oliver K."/>
            <person name="Parker A."/>
            <person name="Patel R."/>
            <person name="Pearce T.A.V."/>
            <person name="Peck A.I."/>
            <person name="Phillimore B.J.C.T."/>
            <person name="Prathalingam S.R."/>
            <person name="Plumb R.W."/>
            <person name="Ramsay H."/>
            <person name="Rice C.M."/>
            <person name="Ross M.T."/>
            <person name="Scott C.E."/>
            <person name="Sehra H.K."/>
            <person name="Shownkeen R."/>
            <person name="Sims S."/>
            <person name="Skuce C.D."/>
            <person name="Smith M.L."/>
            <person name="Soderlund C."/>
            <person name="Steward C.A."/>
            <person name="Sulston J.E."/>
            <person name="Swann R.M."/>
            <person name="Sycamore N."/>
            <person name="Taylor R."/>
            <person name="Tee L."/>
            <person name="Thomas D.W."/>
            <person name="Thorpe A."/>
            <person name="Tracey A."/>
            <person name="Tromans A.C."/>
            <person name="Vaudin M."/>
            <person name="Wall M."/>
            <person name="Wallis J.M."/>
            <person name="Whitehead S.L."/>
            <person name="Whittaker P."/>
            <person name="Willey D.L."/>
            <person name="Williams L."/>
            <person name="Williams S.A."/>
            <person name="Wilming L."/>
            <person name="Wray P.W."/>
            <person name="Hubbard T."/>
            <person name="Durbin R.M."/>
            <person name="Bentley D.R."/>
            <person name="Beck S."/>
            <person name="Rogers J."/>
        </authorList>
    </citation>
    <scope>NUCLEOTIDE SEQUENCE [LARGE SCALE GENOMIC DNA]</scope>
</reference>
<reference key="3">
    <citation type="journal article" date="2004" name="Genome Res.">
        <title>The status, quality, and expansion of the NIH full-length cDNA project: the Mammalian Gene Collection (MGC).</title>
        <authorList>
            <consortium name="The MGC Project Team"/>
        </authorList>
    </citation>
    <scope>NUCLEOTIDE SEQUENCE [LARGE SCALE MRNA] (ISOFORMS 1 AND 3)</scope>
    <source>
        <tissue>Brain</tissue>
        <tissue>Testis</tissue>
    </source>
</reference>
<reference key="4">
    <citation type="submission" date="2005-09" db="EMBL/GenBank/DDBJ databases">
        <authorList>
            <person name="Mural R.J."/>
            <person name="Istrail S."/>
            <person name="Sutton G."/>
            <person name="Florea L."/>
            <person name="Halpern A.L."/>
            <person name="Mobarry C.M."/>
            <person name="Lippert R."/>
            <person name="Walenz B."/>
            <person name="Shatkay H."/>
            <person name="Dew I."/>
            <person name="Miller J.R."/>
            <person name="Flanigan M.J."/>
            <person name="Edwards N.J."/>
            <person name="Bolanos R."/>
            <person name="Fasulo D."/>
            <person name="Halldorsson B.V."/>
            <person name="Hannenhalli S."/>
            <person name="Turner R."/>
            <person name="Yooseph S."/>
            <person name="Lu F."/>
            <person name="Nusskern D.R."/>
            <person name="Shue B.C."/>
            <person name="Zheng X.H."/>
            <person name="Zhong F."/>
            <person name="Delcher A.L."/>
            <person name="Huson D.H."/>
            <person name="Kravitz S.A."/>
            <person name="Mouchard L."/>
            <person name="Reinert K."/>
            <person name="Remington K.A."/>
            <person name="Clark A.G."/>
            <person name="Waterman M.S."/>
            <person name="Eichler E.E."/>
            <person name="Adams M.D."/>
            <person name="Hunkapiller M.W."/>
            <person name="Myers E.W."/>
            <person name="Venter J.C."/>
        </authorList>
    </citation>
    <scope>NUCLEOTIDE SEQUENCE [LARGE SCALE GENOMIC DNA]</scope>
</reference>
<reference key="5">
    <citation type="journal article" date="2007" name="BMC Genomics">
        <title>The full-ORF clone resource of the German cDNA consortium.</title>
        <authorList>
            <person name="Bechtel S."/>
            <person name="Rosenfelder H."/>
            <person name="Duda A."/>
            <person name="Schmidt C.P."/>
            <person name="Ernst U."/>
            <person name="Wellenreuther R."/>
            <person name="Mehrle A."/>
            <person name="Schuster C."/>
            <person name="Bahr A."/>
            <person name="Bloecker H."/>
            <person name="Heubner D."/>
            <person name="Hoerlein A."/>
            <person name="Michel G."/>
            <person name="Wedler H."/>
            <person name="Koehrer K."/>
            <person name="Ottenwaelder B."/>
            <person name="Poustka A."/>
            <person name="Wiemann S."/>
            <person name="Schupp I."/>
        </authorList>
    </citation>
    <scope>NUCLEOTIDE SEQUENCE [LARGE SCALE MRNA] OF 157-298 (ISOFORM 1/2)</scope>
    <source>
        <tissue>Amygdala</tissue>
    </source>
</reference>
<reference key="6">
    <citation type="journal article" date="2016" name="Clin. Genet.">
        <title>NAPB - a novel SNARE-associated protein for early-onset epileptic encephalopathy.</title>
        <authorList>
            <person name="Conroy J."/>
            <person name="Allen N.M."/>
            <person name="Gorman K.M."/>
            <person name="Shahwan A."/>
            <person name="Ennis S."/>
            <person name="Lynch S.A."/>
            <person name="King M.D."/>
        </authorList>
    </citation>
    <scope>INVOLVEMENT IN DEE107</scope>
    <scope>VARIANT DEE107 160-SER--LYS-298 DEL</scope>
</reference>
<reference key="7">
    <citation type="journal article" date="2017" name="JAMA Psychiatry">
        <title>Diagnostic yield and novel candidate genes by exome sequencing in 152 consanguineous families with neurodevelopmental disorders.</title>
        <authorList>
            <person name="Reuter M.S."/>
            <person name="Tawamie H."/>
            <person name="Buchert R."/>
            <person name="Hosny Gebril O."/>
            <person name="Froukh T."/>
            <person name="Thiel C."/>
            <person name="Uebe S."/>
            <person name="Ekici A.B."/>
            <person name="Krumbiegel M."/>
            <person name="Zweier C."/>
            <person name="Hoyer J."/>
            <person name="Eberlein K."/>
            <person name="Bauer J."/>
            <person name="Scheller U."/>
            <person name="Strom T.M."/>
            <person name="Hoffjan S."/>
            <person name="Abdelraouf E.R."/>
            <person name="Meguid N.A."/>
            <person name="Abboud A."/>
            <person name="Al Khateeb M.A."/>
            <person name="Fakher M."/>
            <person name="Hamdan S."/>
            <person name="Ismael A."/>
            <person name="Muhammad S."/>
            <person name="Abdallah E."/>
            <person name="Sticht H."/>
            <person name="Wieczorek D."/>
            <person name="Reis A."/>
            <person name="Abou Jamra R."/>
        </authorList>
    </citation>
    <scope>VARIANT DEE107 58-TRP--LYS-298 DEL</scope>
</reference>
<protein>
    <recommendedName>
        <fullName>Beta-soluble NSF attachment protein</fullName>
        <shortName>SNAP-beta</shortName>
    </recommendedName>
    <alternativeName>
        <fullName>N-ethylmaleimide-sensitive factor attachment protein beta</fullName>
    </alternativeName>
</protein>
<organism>
    <name type="scientific">Homo sapiens</name>
    <name type="common">Human</name>
    <dbReference type="NCBI Taxonomy" id="9606"/>
    <lineage>
        <taxon>Eukaryota</taxon>
        <taxon>Metazoa</taxon>
        <taxon>Chordata</taxon>
        <taxon>Craniata</taxon>
        <taxon>Vertebrata</taxon>
        <taxon>Euteleostomi</taxon>
        <taxon>Mammalia</taxon>
        <taxon>Eutheria</taxon>
        <taxon>Euarchontoglires</taxon>
        <taxon>Primates</taxon>
        <taxon>Haplorrhini</taxon>
        <taxon>Catarrhini</taxon>
        <taxon>Hominidae</taxon>
        <taxon>Homo</taxon>
    </lineage>
</organism>
<sequence>MDNAGKEREAVQLMAEAEKRVKASHSFLRGLFGGNTRIEEACEMYTRAANMFKMAKNWSAAGNAFCQAAKLHMQLQSKHDSATSFVDAGNAYKKADPQEAINCLNAAIDIYTDMGRFTIAAKHHITIAEIYETELVDIEKAIAHYEQSADYYKGEESNSSANKCLLKVAAYAAQLEQYQKAIEIYEQVGANTMDNPLLKYSAKDYFFKAALCHFIVDELNAKLALEKYEEMFPAFTDSRECKLLKKLLEAHEEQNSEAYTEAVKEFDSISRLDQWLTTMLLRIKKSIQGDGEGDGDLK</sequence>
<evidence type="ECO:0000250" key="1"/>
<evidence type="ECO:0000250" key="2">
    <source>
        <dbReference type="UniProtKB" id="P28663"/>
    </source>
</evidence>
<evidence type="ECO:0000269" key="3">
    <source>
    </source>
</evidence>
<evidence type="ECO:0000269" key="4">
    <source>
    </source>
</evidence>
<evidence type="ECO:0000303" key="5">
    <source>
    </source>
</evidence>
<evidence type="ECO:0000303" key="6">
    <source>
    </source>
</evidence>
<evidence type="ECO:0000305" key="7"/>
<gene>
    <name type="primary">NAPB</name>
    <name type="synonym">SNAPB</name>
</gene>